<evidence type="ECO:0000250" key="1"/>
<evidence type="ECO:0000250" key="2">
    <source>
        <dbReference type="UniProtKB" id="Q9H0S4"/>
    </source>
</evidence>
<evidence type="ECO:0000255" key="3">
    <source>
        <dbReference type="PROSITE-ProRule" id="PRU00541"/>
    </source>
</evidence>
<evidence type="ECO:0000255" key="4">
    <source>
        <dbReference type="PROSITE-ProRule" id="PRU00542"/>
    </source>
</evidence>
<evidence type="ECO:0000256" key="5">
    <source>
        <dbReference type="SAM" id="MobiDB-lite"/>
    </source>
</evidence>
<evidence type="ECO:0000305" key="6"/>
<name>DDX47_BOVIN</name>
<sequence length="457" mass="50913">MAASVEHDSLESMEAPQTAVEVEETKTFKDLGVTDVLCEACDQLGWTKPTKIQIEAIPLALQGRDIIGLAETGSGKTGAFALPILNALLETPQRLFALVLTPTRELAFQISEQFEALGSSIGVQCAVIVGGIDSMSQSLALAKKPHIVIATPGRLIDHLENTKGFNLRALKYLVMDEADRILNMDFETEVDKILKVIPRDRKTFLFSATMTKKVQKLQRAALKNPVKCAVSSKYQTVEKLQQYYLFIPSKFKDTYLVYILNELAGNSFMIFCSTCNNTQRTALLLRNLGFTAIPLHGQMSQSKRLGSLNKFKAKARSILLATDVASRGLDIPHVDVVVNFDIPTHSKDYIHRVGRTARAGRSGKAITFVTQYDVELFQRIEHLIGKKLPVFPTQDDEVMMLTERVTEAQRFARMELREHGEKKKRSREDVGDNDDTEGAIGVRNKVAGGKMKKRKGR</sequence>
<accession>Q29S22</accession>
<dbReference type="EC" id="3.6.4.13"/>
<dbReference type="EMBL" id="BC113207">
    <property type="protein sequence ID" value="AAI13208.1"/>
    <property type="molecule type" value="mRNA"/>
</dbReference>
<dbReference type="RefSeq" id="NP_001039850.1">
    <property type="nucleotide sequence ID" value="NM_001046385.1"/>
</dbReference>
<dbReference type="SMR" id="Q29S22"/>
<dbReference type="FunCoup" id="Q29S22">
    <property type="interactions" value="4070"/>
</dbReference>
<dbReference type="STRING" id="9913.ENSBTAP00000057951"/>
<dbReference type="PaxDb" id="9913-ENSBTAP00000003058"/>
<dbReference type="PeptideAtlas" id="Q29S22"/>
<dbReference type="Ensembl" id="ENSBTAT00000003058.6">
    <property type="protein sequence ID" value="ENSBTAP00000003058.5"/>
    <property type="gene ID" value="ENSBTAG00000019608.7"/>
</dbReference>
<dbReference type="GeneID" id="534721"/>
<dbReference type="KEGG" id="bta:534721"/>
<dbReference type="CTD" id="51202"/>
<dbReference type="VEuPathDB" id="HostDB:ENSBTAG00000019608"/>
<dbReference type="VGNC" id="VGNC:27970">
    <property type="gene designation" value="DDX47"/>
</dbReference>
<dbReference type="eggNOG" id="KOG0330">
    <property type="taxonomic scope" value="Eukaryota"/>
</dbReference>
<dbReference type="GeneTree" id="ENSGT00940000155774"/>
<dbReference type="HOGENOM" id="CLU_003041_1_1_1"/>
<dbReference type="InParanoid" id="Q29S22"/>
<dbReference type="OMA" id="GIGIKCC"/>
<dbReference type="OrthoDB" id="10261904at2759"/>
<dbReference type="TreeFam" id="TF105714"/>
<dbReference type="Reactome" id="R-BTA-6791226">
    <property type="pathway name" value="Major pathway of rRNA processing in the nucleolus and cytosol"/>
</dbReference>
<dbReference type="CD-CODE" id="D7FE2080">
    <property type="entry name" value="Nucleolus"/>
</dbReference>
<dbReference type="Proteomes" id="UP000009136">
    <property type="component" value="Chromosome 5"/>
</dbReference>
<dbReference type="Bgee" id="ENSBTAG00000019608">
    <property type="expression patterns" value="Expressed in omasum and 104 other cell types or tissues"/>
</dbReference>
<dbReference type="GO" id="GO:0005730">
    <property type="term" value="C:nucleolus"/>
    <property type="evidence" value="ECO:0000250"/>
    <property type="project" value="UniProtKB"/>
</dbReference>
<dbReference type="GO" id="GO:0005634">
    <property type="term" value="C:nucleus"/>
    <property type="evidence" value="ECO:0000318"/>
    <property type="project" value="GO_Central"/>
</dbReference>
<dbReference type="GO" id="GO:0005524">
    <property type="term" value="F:ATP binding"/>
    <property type="evidence" value="ECO:0007669"/>
    <property type="project" value="UniProtKB-KW"/>
</dbReference>
<dbReference type="GO" id="GO:0016887">
    <property type="term" value="F:ATP hydrolysis activity"/>
    <property type="evidence" value="ECO:0007669"/>
    <property type="project" value="RHEA"/>
</dbReference>
<dbReference type="GO" id="GO:0003723">
    <property type="term" value="F:RNA binding"/>
    <property type="evidence" value="ECO:0007669"/>
    <property type="project" value="UniProtKB-KW"/>
</dbReference>
<dbReference type="GO" id="GO:0003724">
    <property type="term" value="F:RNA helicase activity"/>
    <property type="evidence" value="ECO:0007669"/>
    <property type="project" value="UniProtKB-EC"/>
</dbReference>
<dbReference type="GO" id="GO:0008625">
    <property type="term" value="P:extrinsic apoptotic signaling pathway via death domain receptors"/>
    <property type="evidence" value="ECO:0000250"/>
    <property type="project" value="UniProtKB"/>
</dbReference>
<dbReference type="GO" id="GO:0006397">
    <property type="term" value="P:mRNA processing"/>
    <property type="evidence" value="ECO:0007669"/>
    <property type="project" value="UniProtKB-KW"/>
</dbReference>
<dbReference type="GO" id="GO:0008380">
    <property type="term" value="P:RNA splicing"/>
    <property type="evidence" value="ECO:0000250"/>
    <property type="project" value="UniProtKB"/>
</dbReference>
<dbReference type="GO" id="GO:0006364">
    <property type="term" value="P:rRNA processing"/>
    <property type="evidence" value="ECO:0000250"/>
    <property type="project" value="UniProtKB"/>
</dbReference>
<dbReference type="CDD" id="cd17954">
    <property type="entry name" value="DEADc_DDX47"/>
    <property type="match status" value="1"/>
</dbReference>
<dbReference type="CDD" id="cd18787">
    <property type="entry name" value="SF2_C_DEAD"/>
    <property type="match status" value="1"/>
</dbReference>
<dbReference type="FunFam" id="3.40.50.300:FF:000626">
    <property type="entry name" value="probable ATP-dependent RNA helicase DDX47"/>
    <property type="match status" value="1"/>
</dbReference>
<dbReference type="FunFam" id="3.40.50.300:FF:000681">
    <property type="entry name" value="probable ATP-dependent RNA helicase DDX47"/>
    <property type="match status" value="1"/>
</dbReference>
<dbReference type="Gene3D" id="3.40.50.300">
    <property type="entry name" value="P-loop containing nucleotide triphosphate hydrolases"/>
    <property type="match status" value="2"/>
</dbReference>
<dbReference type="InterPro" id="IPR044765">
    <property type="entry name" value="DDX47/Rrp3_DEADc"/>
</dbReference>
<dbReference type="InterPro" id="IPR011545">
    <property type="entry name" value="DEAD/DEAH_box_helicase_dom"/>
</dbReference>
<dbReference type="InterPro" id="IPR050079">
    <property type="entry name" value="DEAD_box_RNA_helicase"/>
</dbReference>
<dbReference type="InterPro" id="IPR014001">
    <property type="entry name" value="Helicase_ATP-bd"/>
</dbReference>
<dbReference type="InterPro" id="IPR001650">
    <property type="entry name" value="Helicase_C-like"/>
</dbReference>
<dbReference type="InterPro" id="IPR027417">
    <property type="entry name" value="P-loop_NTPase"/>
</dbReference>
<dbReference type="InterPro" id="IPR000629">
    <property type="entry name" value="RNA-helicase_DEAD-box_CS"/>
</dbReference>
<dbReference type="InterPro" id="IPR014014">
    <property type="entry name" value="RNA_helicase_DEAD_Q_motif"/>
</dbReference>
<dbReference type="PANTHER" id="PTHR47959">
    <property type="entry name" value="ATP-DEPENDENT RNA HELICASE RHLE-RELATED"/>
    <property type="match status" value="1"/>
</dbReference>
<dbReference type="PANTHER" id="PTHR47959:SF20">
    <property type="entry name" value="RNA HELICASE"/>
    <property type="match status" value="1"/>
</dbReference>
<dbReference type="Pfam" id="PF00270">
    <property type="entry name" value="DEAD"/>
    <property type="match status" value="1"/>
</dbReference>
<dbReference type="Pfam" id="PF00271">
    <property type="entry name" value="Helicase_C"/>
    <property type="match status" value="1"/>
</dbReference>
<dbReference type="SMART" id="SM00487">
    <property type="entry name" value="DEXDc"/>
    <property type="match status" value="1"/>
</dbReference>
<dbReference type="SMART" id="SM00490">
    <property type="entry name" value="HELICc"/>
    <property type="match status" value="1"/>
</dbReference>
<dbReference type="SUPFAM" id="SSF52540">
    <property type="entry name" value="P-loop containing nucleoside triphosphate hydrolases"/>
    <property type="match status" value="1"/>
</dbReference>
<dbReference type="PROSITE" id="PS00039">
    <property type="entry name" value="DEAD_ATP_HELICASE"/>
    <property type="match status" value="1"/>
</dbReference>
<dbReference type="PROSITE" id="PS51192">
    <property type="entry name" value="HELICASE_ATP_BIND_1"/>
    <property type="match status" value="1"/>
</dbReference>
<dbReference type="PROSITE" id="PS51194">
    <property type="entry name" value="HELICASE_CTER"/>
    <property type="match status" value="1"/>
</dbReference>
<dbReference type="PROSITE" id="PS51195">
    <property type="entry name" value="Q_MOTIF"/>
    <property type="match status" value="1"/>
</dbReference>
<protein>
    <recommendedName>
        <fullName>Probable ATP-dependent RNA helicase DDX47</fullName>
        <ecNumber>3.6.4.13</ecNumber>
    </recommendedName>
    <alternativeName>
        <fullName>DEAD box protein 47</fullName>
    </alternativeName>
</protein>
<feature type="initiator methionine" description="Removed" evidence="2">
    <location>
        <position position="1"/>
    </location>
</feature>
<feature type="chain" id="PRO_0000244563" description="Probable ATP-dependent RNA helicase DDX47">
    <location>
        <begin position="2"/>
        <end position="457"/>
    </location>
</feature>
<feature type="domain" description="Helicase ATP-binding" evidence="3">
    <location>
        <begin position="57"/>
        <end position="228"/>
    </location>
</feature>
<feature type="domain" description="Helicase C-terminal" evidence="4">
    <location>
        <begin position="239"/>
        <end position="399"/>
    </location>
</feature>
<feature type="region of interest" description="Disordered" evidence="5">
    <location>
        <begin position="415"/>
        <end position="457"/>
    </location>
</feature>
<feature type="short sequence motif" description="Q motif">
    <location>
        <begin position="26"/>
        <end position="54"/>
    </location>
</feature>
<feature type="short sequence motif" description="DEAD box">
    <location>
        <begin position="176"/>
        <end position="179"/>
    </location>
</feature>
<feature type="compositionally biased region" description="Basic and acidic residues" evidence="5">
    <location>
        <begin position="415"/>
        <end position="430"/>
    </location>
</feature>
<feature type="binding site" evidence="3">
    <location>
        <begin position="70"/>
        <end position="77"/>
    </location>
    <ligand>
        <name>ATP</name>
        <dbReference type="ChEBI" id="CHEBI:30616"/>
    </ligand>
</feature>
<feature type="modified residue" description="N-acetylalanine" evidence="2">
    <location>
        <position position="2"/>
    </location>
</feature>
<feature type="modified residue" description="Phosphoserine" evidence="2">
    <location>
        <position position="9"/>
    </location>
</feature>
<feature type="modified residue" description="Phosphothreonine" evidence="2">
    <location>
        <position position="151"/>
    </location>
</feature>
<feature type="modified residue" description="Phosphoserine" evidence="2">
    <location>
        <position position="426"/>
    </location>
</feature>
<reference key="1">
    <citation type="submission" date="2006-02" db="EMBL/GenBank/DDBJ databases">
        <authorList>
            <consortium name="NIH - Mammalian Gene Collection (MGC) project"/>
        </authorList>
    </citation>
    <scope>NUCLEOTIDE SEQUENCE [LARGE SCALE MRNA]</scope>
    <source>
        <strain>Hereford</strain>
        <tissue>Uterus</tissue>
    </source>
</reference>
<organism>
    <name type="scientific">Bos taurus</name>
    <name type="common">Bovine</name>
    <dbReference type="NCBI Taxonomy" id="9913"/>
    <lineage>
        <taxon>Eukaryota</taxon>
        <taxon>Metazoa</taxon>
        <taxon>Chordata</taxon>
        <taxon>Craniata</taxon>
        <taxon>Vertebrata</taxon>
        <taxon>Euteleostomi</taxon>
        <taxon>Mammalia</taxon>
        <taxon>Eutheria</taxon>
        <taxon>Laurasiatheria</taxon>
        <taxon>Artiodactyla</taxon>
        <taxon>Ruminantia</taxon>
        <taxon>Pecora</taxon>
        <taxon>Bovidae</taxon>
        <taxon>Bovinae</taxon>
        <taxon>Bos</taxon>
    </lineage>
</organism>
<gene>
    <name type="primary">DDX47</name>
</gene>
<comment type="function">
    <text evidence="1">Involved in apoptosis. May have a role in rRNA processing and mRNA splicing. Associates with pre-rRNA precursors (By similarity).</text>
</comment>
<comment type="catalytic activity">
    <reaction>
        <text>ATP + H2O = ADP + phosphate + H(+)</text>
        <dbReference type="Rhea" id="RHEA:13065"/>
        <dbReference type="ChEBI" id="CHEBI:15377"/>
        <dbReference type="ChEBI" id="CHEBI:15378"/>
        <dbReference type="ChEBI" id="CHEBI:30616"/>
        <dbReference type="ChEBI" id="CHEBI:43474"/>
        <dbReference type="ChEBI" id="CHEBI:456216"/>
        <dbReference type="EC" id="3.6.4.13"/>
    </reaction>
</comment>
<comment type="subunit">
    <text evidence="1">Interacts with AGO1 and AGO2. Interacts with GABARAP. Interacts with NOL8; the interaction is RNA-dependent (By similarity).</text>
</comment>
<comment type="subcellular location">
    <subcellularLocation>
        <location evidence="1">Nucleus</location>
        <location evidence="1">Nucleolus</location>
    </subcellularLocation>
    <text evidence="1">Localizes in the nucleolar-organizing region during ribosome biogenesis.</text>
</comment>
<comment type="similarity">
    <text evidence="6">Belongs to the DEAD box helicase family. DDX47/RRP3 subfamily.</text>
</comment>
<proteinExistence type="evidence at transcript level"/>
<keyword id="KW-0007">Acetylation</keyword>
<keyword id="KW-0053">Apoptosis</keyword>
<keyword id="KW-0067">ATP-binding</keyword>
<keyword id="KW-0347">Helicase</keyword>
<keyword id="KW-0378">Hydrolase</keyword>
<keyword id="KW-0507">mRNA processing</keyword>
<keyword id="KW-0508">mRNA splicing</keyword>
<keyword id="KW-0547">Nucleotide-binding</keyword>
<keyword id="KW-0539">Nucleus</keyword>
<keyword id="KW-0597">Phosphoprotein</keyword>
<keyword id="KW-1185">Reference proteome</keyword>
<keyword id="KW-0694">RNA-binding</keyword>
<keyword id="KW-0698">rRNA processing</keyword>